<evidence type="ECO:0000250" key="1"/>
<evidence type="ECO:0000250" key="2">
    <source>
        <dbReference type="UniProtKB" id="Q99LD4"/>
    </source>
</evidence>
<evidence type="ECO:0000255" key="3">
    <source>
        <dbReference type="PROSITE-ProRule" id="PRU01185"/>
    </source>
</evidence>
<evidence type="ECO:0000256" key="4">
    <source>
        <dbReference type="SAM" id="MobiDB-lite"/>
    </source>
</evidence>
<evidence type="ECO:0000269" key="5">
    <source>
    </source>
</evidence>
<evidence type="ECO:0000269" key="6">
    <source>
    </source>
</evidence>
<evidence type="ECO:0000269" key="7">
    <source>
    </source>
</evidence>
<evidence type="ECO:0000269" key="8">
    <source>
    </source>
</evidence>
<evidence type="ECO:0000269" key="9">
    <source>
    </source>
</evidence>
<evidence type="ECO:0000269" key="10">
    <source>
    </source>
</evidence>
<evidence type="ECO:0000269" key="11">
    <source>
    </source>
</evidence>
<evidence type="ECO:0000269" key="12">
    <source>
    </source>
</evidence>
<evidence type="ECO:0000269" key="13">
    <source>
    </source>
</evidence>
<evidence type="ECO:0000269" key="14">
    <source>
    </source>
</evidence>
<evidence type="ECO:0000269" key="15">
    <source>
    </source>
</evidence>
<evidence type="ECO:0000303" key="16">
    <source>
    </source>
</evidence>
<evidence type="ECO:0000303" key="17">
    <source>
    </source>
</evidence>
<evidence type="ECO:0000303" key="18">
    <source>
    </source>
</evidence>
<evidence type="ECO:0000305" key="19"/>
<evidence type="ECO:0007744" key="20">
    <source>
    </source>
</evidence>
<evidence type="ECO:0007744" key="21">
    <source>
    </source>
</evidence>
<evidence type="ECO:0007744" key="22">
    <source>
    </source>
</evidence>
<evidence type="ECO:0007744" key="23">
    <source>
    </source>
</evidence>
<evidence type="ECO:0007744" key="24">
    <source>
    </source>
</evidence>
<evidence type="ECO:0007744" key="25">
    <source>
    </source>
</evidence>
<evidence type="ECO:0007744" key="26">
    <source>
    </source>
</evidence>
<protein>
    <recommendedName>
        <fullName>COP9 signalosome complex subunit 1</fullName>
        <shortName>SGN1</shortName>
        <shortName>Signalosome subunit 1</shortName>
    </recommendedName>
    <alternativeName>
        <fullName>G protein pathway suppressor 1</fullName>
        <shortName>GPS-1</shortName>
    </alternativeName>
    <alternativeName>
        <fullName>JAB1-containing signalosome subunit 1</fullName>
    </alternativeName>
    <alternativeName>
        <fullName>Protein MFH</fullName>
    </alternativeName>
</protein>
<name>CSN1_HUMAN</name>
<keyword id="KW-0002">3D-structure</keyword>
<keyword id="KW-0025">Alternative splicing</keyword>
<keyword id="KW-0963">Cytoplasm</keyword>
<keyword id="KW-0903">Direct protein sequencing</keyword>
<keyword id="KW-0539">Nucleus</keyword>
<keyword id="KW-0597">Phosphoprotein</keyword>
<keyword id="KW-1267">Proteomics identification</keyword>
<keyword id="KW-1185">Reference proteome</keyword>
<keyword id="KW-0736">Signalosome</keyword>
<reference key="1">
    <citation type="journal article" date="1996" name="Mol. Cell. Biol.">
        <title>Two human cDNAs, including a homolog of Arabidopsis FUS6 (COP11), suppress G-protein- and mitogen-activated protein kinase-mediated signal transduction in yeast and mammalian cells.</title>
        <authorList>
            <person name="Spain B.H."/>
            <person name="Bowdish K.S."/>
            <person name="Pacal A."/>
            <person name="Flueckiger Staub S."/>
            <person name="Koo D."/>
            <person name="Chang K.-Y.R."/>
            <person name="Xie W."/>
            <person name="Colicelli J."/>
        </authorList>
    </citation>
    <scope>NUCLEOTIDE SEQUENCE [MRNA] (ISOFORM 4)</scope>
    <scope>TISSUE SPECIFICITY</scope>
</reference>
<reference key="2">
    <citation type="journal article" date="2004" name="Nat. Genet.">
        <title>Complete sequencing and characterization of 21,243 full-length human cDNAs.</title>
        <authorList>
            <person name="Ota T."/>
            <person name="Suzuki Y."/>
            <person name="Nishikawa T."/>
            <person name="Otsuki T."/>
            <person name="Sugiyama T."/>
            <person name="Irie R."/>
            <person name="Wakamatsu A."/>
            <person name="Hayashi K."/>
            <person name="Sato H."/>
            <person name="Nagai K."/>
            <person name="Kimura K."/>
            <person name="Makita H."/>
            <person name="Sekine M."/>
            <person name="Obayashi M."/>
            <person name="Nishi T."/>
            <person name="Shibahara T."/>
            <person name="Tanaka T."/>
            <person name="Ishii S."/>
            <person name="Yamamoto J."/>
            <person name="Saito K."/>
            <person name="Kawai Y."/>
            <person name="Isono Y."/>
            <person name="Nakamura Y."/>
            <person name="Nagahari K."/>
            <person name="Murakami K."/>
            <person name="Yasuda T."/>
            <person name="Iwayanagi T."/>
            <person name="Wagatsuma M."/>
            <person name="Shiratori A."/>
            <person name="Sudo H."/>
            <person name="Hosoiri T."/>
            <person name="Kaku Y."/>
            <person name="Kodaira H."/>
            <person name="Kondo H."/>
            <person name="Sugawara M."/>
            <person name="Takahashi M."/>
            <person name="Kanda K."/>
            <person name="Yokoi T."/>
            <person name="Furuya T."/>
            <person name="Kikkawa E."/>
            <person name="Omura Y."/>
            <person name="Abe K."/>
            <person name="Kamihara K."/>
            <person name="Katsuta N."/>
            <person name="Sato K."/>
            <person name="Tanikawa M."/>
            <person name="Yamazaki M."/>
            <person name="Ninomiya K."/>
            <person name="Ishibashi T."/>
            <person name="Yamashita H."/>
            <person name="Murakawa K."/>
            <person name="Fujimori K."/>
            <person name="Tanai H."/>
            <person name="Kimata M."/>
            <person name="Watanabe M."/>
            <person name="Hiraoka S."/>
            <person name="Chiba Y."/>
            <person name="Ishida S."/>
            <person name="Ono Y."/>
            <person name="Takiguchi S."/>
            <person name="Watanabe S."/>
            <person name="Yosida M."/>
            <person name="Hotuta T."/>
            <person name="Kusano J."/>
            <person name="Kanehori K."/>
            <person name="Takahashi-Fujii A."/>
            <person name="Hara H."/>
            <person name="Tanase T.-O."/>
            <person name="Nomura Y."/>
            <person name="Togiya S."/>
            <person name="Komai F."/>
            <person name="Hara R."/>
            <person name="Takeuchi K."/>
            <person name="Arita M."/>
            <person name="Imose N."/>
            <person name="Musashino K."/>
            <person name="Yuuki H."/>
            <person name="Oshima A."/>
            <person name="Sasaki N."/>
            <person name="Aotsuka S."/>
            <person name="Yoshikawa Y."/>
            <person name="Matsunawa H."/>
            <person name="Ichihara T."/>
            <person name="Shiohata N."/>
            <person name="Sano S."/>
            <person name="Moriya S."/>
            <person name="Momiyama H."/>
            <person name="Satoh N."/>
            <person name="Takami S."/>
            <person name="Terashima Y."/>
            <person name="Suzuki O."/>
            <person name="Nakagawa S."/>
            <person name="Senoh A."/>
            <person name="Mizoguchi H."/>
            <person name="Goto Y."/>
            <person name="Shimizu F."/>
            <person name="Wakebe H."/>
            <person name="Hishigaki H."/>
            <person name="Watanabe T."/>
            <person name="Sugiyama A."/>
            <person name="Takemoto M."/>
            <person name="Kawakami B."/>
            <person name="Yamazaki M."/>
            <person name="Watanabe K."/>
            <person name="Kumagai A."/>
            <person name="Itakura S."/>
            <person name="Fukuzumi Y."/>
            <person name="Fujimori Y."/>
            <person name="Komiyama M."/>
            <person name="Tashiro H."/>
            <person name="Tanigami A."/>
            <person name="Fujiwara T."/>
            <person name="Ono T."/>
            <person name="Yamada K."/>
            <person name="Fujii Y."/>
            <person name="Ozaki K."/>
            <person name="Hirao M."/>
            <person name="Ohmori Y."/>
            <person name="Kawabata A."/>
            <person name="Hikiji T."/>
            <person name="Kobatake N."/>
            <person name="Inagaki H."/>
            <person name="Ikema Y."/>
            <person name="Okamoto S."/>
            <person name="Okitani R."/>
            <person name="Kawakami T."/>
            <person name="Noguchi S."/>
            <person name="Itoh T."/>
            <person name="Shigeta K."/>
            <person name="Senba T."/>
            <person name="Matsumura K."/>
            <person name="Nakajima Y."/>
            <person name="Mizuno T."/>
            <person name="Morinaga M."/>
            <person name="Sasaki M."/>
            <person name="Togashi T."/>
            <person name="Oyama M."/>
            <person name="Hata H."/>
            <person name="Watanabe M."/>
            <person name="Komatsu T."/>
            <person name="Mizushima-Sugano J."/>
            <person name="Satoh T."/>
            <person name="Shirai Y."/>
            <person name="Takahashi Y."/>
            <person name="Nakagawa K."/>
            <person name="Okumura K."/>
            <person name="Nagase T."/>
            <person name="Nomura N."/>
            <person name="Kikuchi H."/>
            <person name="Masuho Y."/>
            <person name="Yamashita R."/>
            <person name="Nakai K."/>
            <person name="Yada T."/>
            <person name="Nakamura Y."/>
            <person name="Ohara O."/>
            <person name="Isogai T."/>
            <person name="Sugano S."/>
        </authorList>
    </citation>
    <scope>NUCLEOTIDE SEQUENCE [LARGE SCALE MRNA] (ISOFORM 3)</scope>
    <source>
        <tissue>Testis</tissue>
    </source>
</reference>
<reference key="3">
    <citation type="journal article" date="2006" name="Nature">
        <title>DNA sequence of human chromosome 17 and analysis of rearrangement in the human lineage.</title>
        <authorList>
            <person name="Zody M.C."/>
            <person name="Garber M."/>
            <person name="Adams D.J."/>
            <person name="Sharpe T."/>
            <person name="Harrow J."/>
            <person name="Lupski J.R."/>
            <person name="Nicholson C."/>
            <person name="Searle S.M."/>
            <person name="Wilming L."/>
            <person name="Young S.K."/>
            <person name="Abouelleil A."/>
            <person name="Allen N.R."/>
            <person name="Bi W."/>
            <person name="Bloom T."/>
            <person name="Borowsky M.L."/>
            <person name="Bugalter B.E."/>
            <person name="Butler J."/>
            <person name="Chang J.L."/>
            <person name="Chen C.-K."/>
            <person name="Cook A."/>
            <person name="Corum B."/>
            <person name="Cuomo C.A."/>
            <person name="de Jong P.J."/>
            <person name="DeCaprio D."/>
            <person name="Dewar K."/>
            <person name="FitzGerald M."/>
            <person name="Gilbert J."/>
            <person name="Gibson R."/>
            <person name="Gnerre S."/>
            <person name="Goldstein S."/>
            <person name="Grafham D.V."/>
            <person name="Grocock R."/>
            <person name="Hafez N."/>
            <person name="Hagopian D.S."/>
            <person name="Hart E."/>
            <person name="Norman C.H."/>
            <person name="Humphray S."/>
            <person name="Jaffe D.B."/>
            <person name="Jones M."/>
            <person name="Kamal M."/>
            <person name="Khodiyar V.K."/>
            <person name="LaButti K."/>
            <person name="Laird G."/>
            <person name="Lehoczky J."/>
            <person name="Liu X."/>
            <person name="Lokyitsang T."/>
            <person name="Loveland J."/>
            <person name="Lui A."/>
            <person name="Macdonald P."/>
            <person name="Major J.E."/>
            <person name="Matthews L."/>
            <person name="Mauceli E."/>
            <person name="McCarroll S.A."/>
            <person name="Mihalev A.H."/>
            <person name="Mudge J."/>
            <person name="Nguyen C."/>
            <person name="Nicol R."/>
            <person name="O'Leary S.B."/>
            <person name="Osoegawa K."/>
            <person name="Schwartz D.C."/>
            <person name="Shaw-Smith C."/>
            <person name="Stankiewicz P."/>
            <person name="Steward C."/>
            <person name="Swarbreck D."/>
            <person name="Venkataraman V."/>
            <person name="Whittaker C.A."/>
            <person name="Yang X."/>
            <person name="Zimmer A.R."/>
            <person name="Bradley A."/>
            <person name="Hubbard T."/>
            <person name="Birren B.W."/>
            <person name="Rogers J."/>
            <person name="Lander E.S."/>
            <person name="Nusbaum C."/>
        </authorList>
    </citation>
    <scope>NUCLEOTIDE SEQUENCE [LARGE SCALE GENOMIC DNA]</scope>
</reference>
<reference key="4">
    <citation type="journal article" date="2004" name="Genome Res.">
        <title>The status, quality, and expansion of the NIH full-length cDNA project: the Mammalian Gene Collection (MGC).</title>
        <authorList>
            <consortium name="The MGC Project Team"/>
        </authorList>
    </citation>
    <scope>NUCLEOTIDE SEQUENCE [LARGE SCALE MRNA] (ISOFORMS 1 AND 2)</scope>
    <source>
        <tissue>Placenta</tissue>
        <tissue>Prostate</tissue>
    </source>
</reference>
<reference key="5">
    <citation type="submission" date="2003-08" db="EMBL/GenBank/DDBJ databases">
        <title>Cloning of human full-length CDSs in BD Creator(TM) system donor vector.</title>
        <authorList>
            <person name="Kalnine N."/>
            <person name="Chen X."/>
            <person name="Rolfs A."/>
            <person name="Halleck A."/>
            <person name="Hines L."/>
            <person name="Eisenstein S."/>
            <person name="Koundinya M."/>
            <person name="Raphael J."/>
            <person name="Moreira D."/>
            <person name="Kelley T."/>
            <person name="LaBaer J."/>
            <person name="Lin Y."/>
            <person name="Phelan M."/>
            <person name="Farmer A."/>
        </authorList>
    </citation>
    <scope>NUCLEOTIDE SEQUENCE [LARGE SCALE MRNA] OF 17-491 (ISOFORM 1)</scope>
</reference>
<reference key="6">
    <citation type="journal article" date="1998" name="FASEB J.">
        <title>A novel protein complex involved in signal transduction possessing similarities to 26S proteasome subunits.</title>
        <authorList>
            <person name="Seeger M."/>
            <person name="Kraft R."/>
            <person name="Ferrell K."/>
            <person name="Bech-Otschir D."/>
            <person name="Dumdey R."/>
            <person name="Schade R."/>
            <person name="Gordon C."/>
            <person name="Naumann M."/>
            <person name="Dubiel W."/>
        </authorList>
    </citation>
    <scope>PARTIAL PROTEIN SEQUENCE</scope>
    <scope>FUNCTION</scope>
    <scope>SUBCELLULAR LOCATION</scope>
</reference>
<reference key="7">
    <citation type="journal article" date="2001" name="EMBO J.">
        <title>COP9 signalosome-specific phosphorylation targets p53 to degradation by the ubiquitin system.</title>
        <authorList>
            <person name="Bech-Otschir D."/>
            <person name="Kraft R."/>
            <person name="Huang X."/>
            <person name="Henklein P."/>
            <person name="Kapelari B."/>
            <person name="Pollmann C."/>
            <person name="Dubiel W."/>
        </authorList>
    </citation>
    <scope>FUNCTION</scope>
</reference>
<reference key="8">
    <citation type="journal article" date="2001" name="J. Mol. Biol.">
        <title>The subunit 1 of the COP9 signalosome suppresses gene expression through its N-terminal domain and incorporates into the complex through the PCI domain.</title>
        <authorList>
            <person name="Tsuge T."/>
            <person name="Matsui M."/>
            <person name="Wei N."/>
        </authorList>
    </citation>
    <scope>DOMAIN</scope>
    <scope>INTERACTION WITH COPS2; COPS3 AND COPS4</scope>
</reference>
<reference key="9">
    <citation type="journal article" date="2001" name="Science">
        <title>Promotion of NEDD-CUL1 conjugate cleavage by COP9 signalosome.</title>
        <authorList>
            <person name="Lyapina S."/>
            <person name="Cope G."/>
            <person name="Shevchenko A."/>
            <person name="Serino G."/>
            <person name="Tsuge T."/>
            <person name="Zhou C."/>
            <person name="Wolf D.A."/>
            <person name="Wei N."/>
            <person name="Shevchenko A."/>
            <person name="Deshaies R.J."/>
        </authorList>
    </citation>
    <scope>FUNCTION</scope>
    <scope>COMPOSITION OF THE CSN COMPLEX</scope>
</reference>
<reference key="10">
    <citation type="journal article" date="2002" name="J. Biol. Chem.">
        <title>Inositol 1,3,4-trisphosphate 5/6-kinase associates with the COP9 signalosome by binding to CSN1.</title>
        <authorList>
            <person name="Sun Y."/>
            <person name="Wilson M.P."/>
            <person name="Majerus P.W."/>
        </authorList>
    </citation>
    <scope>INTERACTION WITH ITPK1</scope>
</reference>
<reference key="11">
    <citation type="journal article" date="2003" name="Cell">
        <title>The ubiquitin ligase activity in the DDB2 and CSA complexes is differentially regulated by the COP9 signalosome in response to DNA damage.</title>
        <authorList>
            <person name="Groisman R."/>
            <person name="Polanowska J."/>
            <person name="Kuraoka I."/>
            <person name="Sawada J."/>
            <person name="Saijo M."/>
            <person name="Drapkin R."/>
            <person name="Kisselev A.F."/>
            <person name="Tanaka K."/>
            <person name="Nakatani Y."/>
        </authorList>
    </citation>
    <scope>FUNCTION</scope>
</reference>
<reference key="12">
    <citation type="journal article" date="2003" name="EMBO J.">
        <title>Protein kinase CK2 and protein kinase D are associated with the COP9 signalosome.</title>
        <authorList>
            <person name="Uhle S."/>
            <person name="Medalia O."/>
            <person name="Waldron R."/>
            <person name="Dumdey R."/>
            <person name="Henklein P."/>
            <person name="Bech-Otschir D."/>
            <person name="Huang X."/>
            <person name="Berse M."/>
            <person name="Sperling J."/>
            <person name="Schade R."/>
            <person name="Dubiel W."/>
        </authorList>
    </citation>
    <scope>FUNCTION</scope>
</reference>
<reference key="13">
    <citation type="journal article" date="2006" name="Nat. Biotechnol.">
        <title>A probability-based approach for high-throughput protein phosphorylation analysis and site localization.</title>
        <authorList>
            <person name="Beausoleil S.A."/>
            <person name="Villen J."/>
            <person name="Gerber S.A."/>
            <person name="Rush J."/>
            <person name="Gygi S.P."/>
        </authorList>
    </citation>
    <scope>PHOSPHORYLATION [LARGE SCALE ANALYSIS] AT THR-479</scope>
    <scope>IDENTIFICATION BY MASS SPECTROMETRY [LARGE SCALE ANALYSIS]</scope>
    <source>
        <tissue>Cervix carcinoma</tissue>
    </source>
</reference>
<reference key="14">
    <citation type="journal article" date="2007" name="Science">
        <title>ATM and ATR substrate analysis reveals extensive protein networks responsive to DNA damage.</title>
        <authorList>
            <person name="Matsuoka S."/>
            <person name="Ballif B.A."/>
            <person name="Smogorzewska A."/>
            <person name="McDonald E.R. III"/>
            <person name="Hurov K.E."/>
            <person name="Luo J."/>
            <person name="Bakalarski C.E."/>
            <person name="Zhao Z."/>
            <person name="Solimini N."/>
            <person name="Lerenthal Y."/>
            <person name="Shiloh Y."/>
            <person name="Gygi S.P."/>
            <person name="Elledge S.J."/>
        </authorList>
    </citation>
    <scope>PHOSPHORYLATION [LARGE SCALE ANALYSIS] AT THR-479</scope>
    <scope>IDENTIFICATION BY MASS SPECTROMETRY [LARGE SCALE ANALYSIS]</scope>
    <source>
        <tissue>Embryonic kidney</tissue>
    </source>
</reference>
<reference key="15">
    <citation type="journal article" date="2008" name="J. Proteome Res.">
        <title>Characterization of the human COP9 signalosome complex using affinity purification and mass spectrometry.</title>
        <authorList>
            <person name="Fang L."/>
            <person name="Wang X."/>
            <person name="Yamoah K."/>
            <person name="Chen P.L."/>
            <person name="Pan Z.Q."/>
            <person name="Huang L."/>
        </authorList>
    </citation>
    <scope>IDENTIFICATION IN THE CSN COMPLEX</scope>
    <scope>CLEAVAGE OF INITIATOR METHIONINE</scope>
    <scope>PHOSPHORYLATION AT SER-468; SER-474; THR-479 AND SER-483</scope>
</reference>
<reference key="16">
    <citation type="journal article" date="2008" name="Proc. Natl. Acad. Sci. U.S.A.">
        <title>A quantitative atlas of mitotic phosphorylation.</title>
        <authorList>
            <person name="Dephoure N."/>
            <person name="Zhou C."/>
            <person name="Villen J."/>
            <person name="Beausoleil S.A."/>
            <person name="Bakalarski C.E."/>
            <person name="Elledge S.J."/>
            <person name="Gygi S.P."/>
        </authorList>
    </citation>
    <scope>PHOSPHORYLATION [LARGE SCALE ANALYSIS] AT SER-474; THR-479 AND SER-483</scope>
    <scope>IDENTIFICATION BY MASS SPECTROMETRY [LARGE SCALE ANALYSIS]</scope>
    <source>
        <tissue>Cervix carcinoma</tissue>
    </source>
</reference>
<reference key="17">
    <citation type="journal article" date="2009" name="Anal. Chem.">
        <title>Lys-N and trypsin cover complementary parts of the phosphoproteome in a refined SCX-based approach.</title>
        <authorList>
            <person name="Gauci S."/>
            <person name="Helbig A.O."/>
            <person name="Slijper M."/>
            <person name="Krijgsveld J."/>
            <person name="Heck A.J."/>
            <person name="Mohammed S."/>
        </authorList>
    </citation>
    <scope>IDENTIFICATION BY MASS SPECTROMETRY [LARGE SCALE ANALYSIS]</scope>
</reference>
<reference key="18">
    <citation type="journal article" date="2009" name="Sci. Signal.">
        <title>Quantitative phosphoproteomic analysis of T cell receptor signaling reveals system-wide modulation of protein-protein interactions.</title>
        <authorList>
            <person name="Mayya V."/>
            <person name="Lundgren D.H."/>
            <person name="Hwang S.-I."/>
            <person name="Rezaul K."/>
            <person name="Wu L."/>
            <person name="Eng J.K."/>
            <person name="Rodionov V."/>
            <person name="Han D.K."/>
        </authorList>
    </citation>
    <scope>PHOSPHORYLATION [LARGE SCALE ANALYSIS] AT THR-479</scope>
    <scope>IDENTIFICATION BY MASS SPECTROMETRY [LARGE SCALE ANALYSIS]</scope>
    <source>
        <tissue>Leukemic T-cell</tissue>
    </source>
</reference>
<reference key="19">
    <citation type="journal article" date="2010" name="Sci. Signal.">
        <title>Quantitative phosphoproteomics reveals widespread full phosphorylation site occupancy during mitosis.</title>
        <authorList>
            <person name="Olsen J.V."/>
            <person name="Vermeulen M."/>
            <person name="Santamaria A."/>
            <person name="Kumar C."/>
            <person name="Miller M.L."/>
            <person name="Jensen L.J."/>
            <person name="Gnad F."/>
            <person name="Cox J."/>
            <person name="Jensen T.S."/>
            <person name="Nigg E.A."/>
            <person name="Brunak S."/>
            <person name="Mann M."/>
        </authorList>
    </citation>
    <scope>PHOSPHORYLATION [LARGE SCALE ANALYSIS] AT SER-474 AND THR-479</scope>
    <scope>IDENTIFICATION BY MASS SPECTROMETRY [LARGE SCALE ANALYSIS]</scope>
    <source>
        <tissue>Cervix carcinoma</tissue>
    </source>
</reference>
<reference key="20">
    <citation type="journal article" date="2011" name="BMC Syst. Biol.">
        <title>Initial characterization of the human central proteome.</title>
        <authorList>
            <person name="Burkard T.R."/>
            <person name="Planyavsky M."/>
            <person name="Kaupe I."/>
            <person name="Breitwieser F.P."/>
            <person name="Buerckstuemmer T."/>
            <person name="Bennett K.L."/>
            <person name="Superti-Furga G."/>
            <person name="Colinge J."/>
        </authorList>
    </citation>
    <scope>IDENTIFICATION BY MASS SPECTROMETRY [LARGE SCALE ANALYSIS]</scope>
</reference>
<reference key="21">
    <citation type="journal article" date="2011" name="Sci. Signal.">
        <title>System-wide temporal characterization of the proteome and phosphoproteome of human embryonic stem cell differentiation.</title>
        <authorList>
            <person name="Rigbolt K.T."/>
            <person name="Prokhorova T.A."/>
            <person name="Akimov V."/>
            <person name="Henningsen J."/>
            <person name="Johansen P.T."/>
            <person name="Kratchmarova I."/>
            <person name="Kassem M."/>
            <person name="Mann M."/>
            <person name="Olsen J.V."/>
            <person name="Blagoev B."/>
        </authorList>
    </citation>
    <scope>PHOSPHORYLATION [LARGE SCALE ANALYSIS] AT SER-468; SER-474 AND THR-479</scope>
    <scope>IDENTIFICATION BY MASS SPECTROMETRY [LARGE SCALE ANALYSIS]</scope>
</reference>
<reference key="22">
    <citation type="journal article" date="2013" name="J. Proteome Res.">
        <title>Toward a comprehensive characterization of a human cancer cell phosphoproteome.</title>
        <authorList>
            <person name="Zhou H."/>
            <person name="Di Palma S."/>
            <person name="Preisinger C."/>
            <person name="Peng M."/>
            <person name="Polat A.N."/>
            <person name="Heck A.J."/>
            <person name="Mohammed S."/>
        </authorList>
    </citation>
    <scope>PHOSPHORYLATION [LARGE SCALE ANALYSIS] AT SER-468; SER-474; THR-479 AND SER-483</scope>
    <scope>IDENTIFICATION BY MASS SPECTROMETRY [LARGE SCALE ANALYSIS]</scope>
    <source>
        <tissue>Cervix carcinoma</tissue>
        <tissue>Erythroleukemia</tissue>
    </source>
</reference>
<reference key="23">
    <citation type="journal article" date="2015" name="Cell Rep.">
        <title>CSNAP is a stoichiometric subunit of the COP9 signalosome.</title>
        <authorList>
            <person name="Rozen S."/>
            <person name="Fuezesi-Levi M.G."/>
            <person name="Ben-Nissan G."/>
            <person name="Mizrachi L."/>
            <person name="Gabashvili A."/>
            <person name="Levin Y."/>
            <person name="Ben-Dor S."/>
            <person name="Eisenstein M."/>
            <person name="Sharon M."/>
        </authorList>
    </citation>
    <scope>COMPOSITION OF THE CSN COMPLEX</scope>
</reference>
<reference key="24">
    <citation type="journal article" date="2022" name="Cell. Mol. Life Sci.">
        <title>USP48 and A20 synergistically promote cell survival in Helicobacter pylori infection.</title>
        <authorList>
            <person name="Jantaree P."/>
            <person name="Chaithongyot S."/>
            <person name="Sokolova O."/>
            <person name="Naumann M."/>
        </authorList>
    </citation>
    <scope>INTERACTION WITH USP48</scope>
</reference>
<sequence>MPLPVQVFNLQGAVEPMQIDVDPQEDPQNAPDVNYVVENPSLDLEQYAASYSGLMRIERLQFIADHCPTLRVEALKMALSFVQRTFNVDMYEEIHRKLSEATRSSLRELQNAPDAIPESGVEPPALDTAWVEATRKKALLKLEKLDTDLKNYKGNSIKESIRRGHDDLGDHYLDCGDLSNALKCYSRARDYCTSAKHVINMCLNVIKVSVYLQNWSHVLSYVSKAESTPEIAEQRGERDSQTQAILTKLKCAAGLAELAARKYKQAAKCLLLASFDHCDFPELLSPSNVAIYGGLCALATFDRQELQRNVISSSSFKLFLELEPQVRDIIFKFYESKYASCLKMLDEMKDNLLLDMYLAPHVRTLYTQIRNRALIQYFSPYVSADMHRMAAAFNTTVAALEDELTQLILEGLISARVDSHSKILYARDVDQRSTTFEKSLLMGKEFQRRAKAMMLRAAVLRNQIHVKSPPREGSQGELTPANSQSRMSTNM</sequence>
<comment type="function">
    <text evidence="6 7 9 10 15">Essential component of the COP9 signalosome complex (CSN), a complex involved in various cellular and developmental processes. The CSN complex is an essential regulator of the ubiquitin (Ubl) conjugation pathway by mediating the deneddylation of the cullin subunits of SCF-type E3 ligase complexes, leading to decrease the Ubl ligase activity of SCF-type complexes such as SCF, CSA or DDB2. The complex is also involved in phosphorylation of p53/TP53, c-jun/JUN, IkappaBalpha/NFKBIA, ITPK1 and IRF8/ICSBP, possibly via its association with CK2 and PKD kinases. CSN-dependent phosphorylation of TP53 and JUN promotes and protects degradation by the Ubl system, respectively. Suppresses G-protein- and mitogen-activated protein kinase-mediated signal transduction.</text>
</comment>
<comment type="subunit">
    <text evidence="2 5 7 8 11 12 13">Component of the CSN complex, composed of COPS1/GPS1, COPS2, COPS3, COPS4, COPS5, COPS6, COPS7 (COPS7A or COPS7B), COPS8 and COPS9 isoform 1 (PubMed:11337588, PubMed:18850735, PubMed:26456823). In the complex, it probably interacts directly with COPS2, COPS3, COPS4 and COPS5 (PubMed:11114242). Interacts directly with inositol kinase ITPK1 (PubMed:12324474). Interacts with CAPN8 (By similarity). Interacts with USP48 (PubMed:35913642). Interacts with ASB4; this interaction negatively regulates GPS1 (By similarity).</text>
</comment>
<comment type="interaction">
    <interactant intactId="EBI-725197">
        <id>Q13098</id>
    </interactant>
    <interactant intactId="EBI-594661">
        <id>Q92905</id>
        <label>COPS5</label>
    </interactant>
    <organismsDiffer>false</organismsDiffer>
    <experiments>19</experiments>
</comment>
<comment type="interaction">
    <interactant intactId="EBI-10983983">
        <id>Q13098-7</id>
    </interactant>
    <interactant intactId="EBI-743033">
        <id>Q9NZN8</id>
        <label>CNOT2</label>
    </interactant>
    <organismsDiffer>false</organismsDiffer>
    <experiments>3</experiments>
</comment>
<comment type="interaction">
    <interactant intactId="EBI-10983983">
        <id>Q13098-7</id>
    </interactant>
    <interactant intactId="EBI-1050386">
        <id>P61201</id>
        <label>COPS2</label>
    </interactant>
    <organismsDiffer>false</organismsDiffer>
    <experiments>5</experiments>
</comment>
<comment type="interaction">
    <interactant intactId="EBI-10983983">
        <id>Q13098-7</id>
    </interactant>
    <interactant intactId="EBI-2510102">
        <id>Q99627</id>
        <label>COPS8</label>
    </interactant>
    <organismsDiffer>false</organismsDiffer>
    <experiments>4</experiments>
</comment>
<comment type="subcellular location">
    <subcellularLocation>
        <location evidence="15">Cytoplasm</location>
    </subcellularLocation>
    <subcellularLocation>
        <location evidence="15">Nucleus</location>
    </subcellularLocation>
</comment>
<comment type="alternative products">
    <event type="alternative splicing"/>
    <isoform>
        <id>Q13098-4</id>
        <name>1</name>
        <sequence type="displayed"/>
    </isoform>
    <isoform>
        <id>Q13098-5</id>
        <name>4</name>
        <sequence type="described" ref="VSP_036242"/>
    </isoform>
    <isoform>
        <id>Q13098-6</id>
        <name>3</name>
        <sequence type="described" ref="VSP_036241 VSP_011882"/>
    </isoform>
    <isoform>
        <id>Q13098-7</id>
        <name>2</name>
        <sequence type="described" ref="VSP_036240 VSP_036242"/>
    </isoform>
</comment>
<comment type="tissue specificity">
    <text evidence="14">Widely expressed.</text>
</comment>
<comment type="domain">
    <text evidence="1">The PCI domain is necessary and sufficient for the interactions with other CSN subunits of the complex. Mediates the interaction with CAPN8 (By similarity).</text>
</comment>
<comment type="domain">
    <text evidence="5">The N-terminal part (1-216), which is not required for deneddylating activity and CSN complex formation, is nevertheless essential for other aspects of CSN complex function, such as repression of c-fos/FOS expression.</text>
</comment>
<comment type="similarity">
    <text evidence="19">Belongs to the CSN1 family.</text>
</comment>
<comment type="sequence caution" evidence="19">
    <conflict type="erroneous initiation">
        <sequence resource="EMBL-CDS" id="AAC50906"/>
    </conflict>
</comment>
<proteinExistence type="evidence at protein level"/>
<feature type="initiator methionine" description="Removed" evidence="11">
    <location>
        <position position="1"/>
    </location>
</feature>
<feature type="chain" id="PRO_0000120959" description="COP9 signalosome complex subunit 1">
    <location>
        <begin position="2"/>
        <end position="491"/>
    </location>
</feature>
<feature type="domain" description="PCI" evidence="3">
    <location>
        <begin position="269"/>
        <end position="431"/>
    </location>
</feature>
<feature type="region of interest" description="Disordered" evidence="4">
    <location>
        <begin position="465"/>
        <end position="491"/>
    </location>
</feature>
<feature type="compositionally biased region" description="Polar residues" evidence="4">
    <location>
        <begin position="476"/>
        <end position="491"/>
    </location>
</feature>
<feature type="modified residue" description="Phosphoserine" evidence="11 25 26">
    <location>
        <position position="468"/>
    </location>
</feature>
<feature type="modified residue" description="Phosphoserine" evidence="11 22 24 25 26">
    <location>
        <position position="474"/>
    </location>
</feature>
<feature type="modified residue" description="Phosphothreonine" evidence="11 20 21 22 23 24 25 26">
    <location>
        <position position="479"/>
    </location>
</feature>
<feature type="modified residue" description="Phosphoserine" evidence="11 22 26">
    <location>
        <position position="483"/>
    </location>
</feature>
<feature type="splice variant" id="VSP_036240" description="In isoform 2." evidence="17">
    <original>MPLPVQVFNLQ</original>
    <variation>MRDSSAPSSASSSVTDLYCTPHSSRSDLVLPGTAGDFSLSASLSACTLLYE</variation>
    <location>
        <begin position="1"/>
        <end position="11"/>
    </location>
</feature>
<feature type="splice variant" id="VSP_036241" description="In isoform 3." evidence="16">
    <original>GAVEPMQIDVDPQEDPQNAPDVNYVVENPSLDLEQYAASYSGLMRIERLQFIADHCPTLRVEALKMALSFVQRTFNVDMYEEIHRKLSEATRSSLREL</original>
    <variation>PASSVSGSGGAESQDRMRDSSAPSSASSSVTDLYCTPHSSRSDLVLPGMAGDFSLSASLSACTLLYEGAVEPMQIDVDPQEDP</variation>
    <location>
        <begin position="12"/>
        <end position="109"/>
    </location>
</feature>
<feature type="splice variant" id="VSP_036242" description="In isoform 2 and isoform 4." evidence="17 18">
    <location>
        <begin position="103"/>
        <end position="106"/>
    </location>
</feature>
<feature type="splice variant" id="VSP_011882" description="In isoform 3." evidence="16">
    <original>REGSQGELTPANSQSRMSTNM</original>
    <variation>TSTDLGPPGGSVLPAAQLRGLATGCHPACVPSLGLRRQAAASCGPSWKERPAGLDPVGFCPQGADCAAPRPSGTISQTPPVPASVRCRQVGGVH</variation>
    <location>
        <begin position="471"/>
        <end position="491"/>
    </location>
</feature>
<feature type="sequence conflict" description="In Ref. 2; BAC04120." evidence="19" ref="2">
    <original>A</original>
    <variation>T</variation>
    <location>
        <position position="259"/>
    </location>
</feature>
<accession>Q13098</accession>
<accession>Q8NA10</accession>
<accession>Q9BWL1</accession>
<dbReference type="EMBL" id="U20285">
    <property type="protein sequence ID" value="AAC50906.2"/>
    <property type="status" value="ALT_INIT"/>
    <property type="molecule type" value="mRNA"/>
</dbReference>
<dbReference type="EMBL" id="AK093283">
    <property type="protein sequence ID" value="BAC04120.1"/>
    <property type="molecule type" value="mRNA"/>
</dbReference>
<dbReference type="EMBL" id="AC135056">
    <property type="status" value="NOT_ANNOTATED_CDS"/>
    <property type="molecule type" value="Genomic_DNA"/>
</dbReference>
<dbReference type="EMBL" id="BC000155">
    <property type="protein sequence ID" value="AAH00155.3"/>
    <property type="molecule type" value="mRNA"/>
</dbReference>
<dbReference type="EMBL" id="BC064503">
    <property type="protein sequence ID" value="AAH64503.1"/>
    <property type="molecule type" value="mRNA"/>
</dbReference>
<dbReference type="EMBL" id="BT009834">
    <property type="protein sequence ID" value="AAP88836.1"/>
    <property type="molecule type" value="mRNA"/>
</dbReference>
<dbReference type="CCDS" id="CCDS11800.1">
    <molecule id="Q13098-7"/>
</dbReference>
<dbReference type="CCDS" id="CCDS32774.1">
    <molecule id="Q13098-4"/>
</dbReference>
<dbReference type="CCDS" id="CCDS82226.1">
    <molecule id="Q13098-5"/>
</dbReference>
<dbReference type="PIR" id="G01646">
    <property type="entry name" value="G01646"/>
</dbReference>
<dbReference type="RefSeq" id="NP_001308021.1">
    <molecule id="Q13098-5"/>
    <property type="nucleotide sequence ID" value="NM_001321092.3"/>
</dbReference>
<dbReference type="RefSeq" id="NP_004118.3">
    <molecule id="Q13098-4"/>
    <property type="nucleotide sequence ID" value="NM_004127.5"/>
</dbReference>
<dbReference type="RefSeq" id="NP_997657.1">
    <molecule id="Q13098-7"/>
    <property type="nucleotide sequence ID" value="NM_212492.4"/>
</dbReference>
<dbReference type="RefSeq" id="XP_016880023.1">
    <property type="nucleotide sequence ID" value="XM_017024534.1"/>
</dbReference>
<dbReference type="RefSeq" id="XP_047291803.1">
    <molecule id="Q13098-7"/>
    <property type="nucleotide sequence ID" value="XM_047435847.1"/>
</dbReference>
<dbReference type="RefSeq" id="XP_054171831.1">
    <molecule id="Q13098-7"/>
    <property type="nucleotide sequence ID" value="XM_054315856.1"/>
</dbReference>
<dbReference type="PDB" id="4D10">
    <property type="method" value="X-ray"/>
    <property type="resolution" value="3.80 A"/>
    <property type="chains" value="A/I=12-491"/>
</dbReference>
<dbReference type="PDB" id="4D18">
    <property type="method" value="X-ray"/>
    <property type="resolution" value="4.08 A"/>
    <property type="chains" value="A/I=12-491"/>
</dbReference>
<dbReference type="PDB" id="4WSN">
    <property type="method" value="X-ray"/>
    <property type="resolution" value="5.50 A"/>
    <property type="chains" value="A/I/Q/Y/g/o=12-491"/>
</dbReference>
<dbReference type="PDB" id="6R6H">
    <property type="method" value="EM"/>
    <property type="resolution" value="8.40 A"/>
    <property type="chains" value="A=1-491"/>
</dbReference>
<dbReference type="PDB" id="6R7F">
    <property type="method" value="EM"/>
    <property type="resolution" value="8.20 A"/>
    <property type="chains" value="A=37-469"/>
</dbReference>
<dbReference type="PDB" id="6R7H">
    <property type="method" value="EM"/>
    <property type="resolution" value="8.80 A"/>
    <property type="chains" value="A=37-469"/>
</dbReference>
<dbReference type="PDB" id="6R7I">
    <property type="method" value="EM"/>
    <property type="resolution" value="5.90 A"/>
    <property type="chains" value="A=37-491"/>
</dbReference>
<dbReference type="PDB" id="6R7N">
    <property type="method" value="EM"/>
    <property type="resolution" value="6.50 A"/>
    <property type="chains" value="A=1-491"/>
</dbReference>
<dbReference type="PDB" id="8H38">
    <property type="method" value="EM"/>
    <property type="resolution" value="4.25 A"/>
    <property type="chains" value="A=12-491"/>
</dbReference>
<dbReference type="PDB" id="8H3A">
    <property type="method" value="EM"/>
    <property type="resolution" value="7.51 A"/>
    <property type="chains" value="A=12-491"/>
</dbReference>
<dbReference type="PDB" id="8H3F">
    <property type="method" value="EM"/>
    <property type="resolution" value="6.73 A"/>
    <property type="chains" value="A=12-491"/>
</dbReference>
<dbReference type="PDBsum" id="4D10"/>
<dbReference type="PDBsum" id="4D18"/>
<dbReference type="PDBsum" id="4WSN"/>
<dbReference type="PDBsum" id="6R6H"/>
<dbReference type="PDBsum" id="6R7F"/>
<dbReference type="PDBsum" id="6R7H"/>
<dbReference type="PDBsum" id="6R7I"/>
<dbReference type="PDBsum" id="6R7N"/>
<dbReference type="PDBsum" id="8H38"/>
<dbReference type="PDBsum" id="8H3A"/>
<dbReference type="PDBsum" id="8H3F"/>
<dbReference type="EMDB" id="EMD-3313"/>
<dbReference type="EMDB" id="EMD-3314"/>
<dbReference type="EMDB" id="EMD-3315"/>
<dbReference type="EMDB" id="EMD-3316"/>
<dbReference type="EMDB" id="EMD-3317"/>
<dbReference type="EMDB" id="EMD-3401"/>
<dbReference type="EMDB" id="EMD-34455"/>
<dbReference type="EMDB" id="EMD-34462"/>
<dbReference type="EMDB" id="EMD-34467"/>
<dbReference type="EMDB" id="EMD-4736"/>
<dbReference type="EMDB" id="EMD-4739"/>
<dbReference type="EMDB" id="EMD-4741"/>
<dbReference type="EMDB" id="EMD-4742"/>
<dbReference type="EMDB" id="EMD-4744"/>
<dbReference type="SMR" id="Q13098"/>
<dbReference type="BioGRID" id="109131">
    <property type="interactions" value="239"/>
</dbReference>
<dbReference type="ComplexPortal" id="CPX-1870">
    <property type="entry name" value="COP9 signalosome variant 1"/>
</dbReference>
<dbReference type="ComplexPortal" id="CPX-1871">
    <property type="entry name" value="COP9 signalosome variant 2"/>
</dbReference>
<dbReference type="CORUM" id="Q13098"/>
<dbReference type="DIP" id="DIP-42077N"/>
<dbReference type="FunCoup" id="Q13098">
    <property type="interactions" value="3476"/>
</dbReference>
<dbReference type="IntAct" id="Q13098">
    <property type="interactions" value="98"/>
</dbReference>
<dbReference type="MINT" id="Q13098"/>
<dbReference type="STRING" id="9606.ENSP00000376167"/>
<dbReference type="GlyGen" id="Q13098">
    <property type="glycosylation" value="1 site, 1 O-linked glycan (1 site)"/>
</dbReference>
<dbReference type="iPTMnet" id="Q13098"/>
<dbReference type="MetOSite" id="Q13098"/>
<dbReference type="PhosphoSitePlus" id="Q13098"/>
<dbReference type="SwissPalm" id="Q13098"/>
<dbReference type="BioMuta" id="GPS1"/>
<dbReference type="DMDM" id="223590263"/>
<dbReference type="jPOST" id="Q13098"/>
<dbReference type="MassIVE" id="Q13098"/>
<dbReference type="PaxDb" id="9606-ENSP00000376167"/>
<dbReference type="PeptideAtlas" id="Q13098"/>
<dbReference type="ProteomicsDB" id="59147">
    <molecule id="Q13098-4"/>
</dbReference>
<dbReference type="ProteomicsDB" id="59148">
    <molecule id="Q13098-5"/>
</dbReference>
<dbReference type="ProteomicsDB" id="59149">
    <molecule id="Q13098-6"/>
</dbReference>
<dbReference type="ProteomicsDB" id="59150">
    <molecule id="Q13098-7"/>
</dbReference>
<dbReference type="Pumba" id="Q13098"/>
<dbReference type="TopDownProteomics" id="Q13098-5">
    <molecule id="Q13098-5"/>
</dbReference>
<dbReference type="Antibodypedia" id="19873">
    <property type="antibodies" value="354 antibodies from 35 providers"/>
</dbReference>
<dbReference type="DNASU" id="2873"/>
<dbReference type="Ensembl" id="ENST00000306823.10">
    <molecule id="Q13098-4"/>
    <property type="protein sequence ID" value="ENSP00000302873.6"/>
    <property type="gene ID" value="ENSG00000169727.14"/>
</dbReference>
<dbReference type="Ensembl" id="ENST00000392358.6">
    <molecule id="Q13098-7"/>
    <property type="protein sequence ID" value="ENSP00000376167.2"/>
    <property type="gene ID" value="ENSG00000169727.14"/>
</dbReference>
<dbReference type="Ensembl" id="ENST00000578552.6">
    <molecule id="Q13098-5"/>
    <property type="protein sequence ID" value="ENSP00000462265.1"/>
    <property type="gene ID" value="ENSG00000169727.14"/>
</dbReference>
<dbReference type="GeneID" id="2873"/>
<dbReference type="KEGG" id="hsa:2873"/>
<dbReference type="MANE-Select" id="ENST00000578552.6">
    <molecule id="Q13098-5"/>
    <property type="protein sequence ID" value="ENSP00000462265.1"/>
    <property type="RefSeq nucleotide sequence ID" value="NM_001321092.3"/>
    <property type="RefSeq protein sequence ID" value="NP_001308021.1"/>
</dbReference>
<dbReference type="UCSC" id="uc002kdk.2">
    <molecule id="Q13098-4"/>
    <property type="organism name" value="human"/>
</dbReference>
<dbReference type="AGR" id="HGNC:4549"/>
<dbReference type="CTD" id="2873"/>
<dbReference type="DisGeNET" id="2873"/>
<dbReference type="GeneCards" id="GPS1"/>
<dbReference type="HGNC" id="HGNC:4549">
    <property type="gene designation" value="GPS1"/>
</dbReference>
<dbReference type="HPA" id="ENSG00000169727">
    <property type="expression patterns" value="Low tissue specificity"/>
</dbReference>
<dbReference type="MIM" id="601934">
    <property type="type" value="gene"/>
</dbReference>
<dbReference type="neXtProt" id="NX_Q13098"/>
<dbReference type="OpenTargets" id="ENSG00000169727"/>
<dbReference type="PharmGKB" id="PA28944"/>
<dbReference type="VEuPathDB" id="HostDB:ENSG00000169727"/>
<dbReference type="eggNOG" id="KOG0686">
    <property type="taxonomic scope" value="Eukaryota"/>
</dbReference>
<dbReference type="GeneTree" id="ENSGT00510000046608"/>
<dbReference type="InParanoid" id="Q13098"/>
<dbReference type="OMA" id="IYLQNWA"/>
<dbReference type="OrthoDB" id="422427at2759"/>
<dbReference type="PAN-GO" id="Q13098">
    <property type="GO annotations" value="1 GO annotation based on evolutionary models"/>
</dbReference>
<dbReference type="PhylomeDB" id="Q13098"/>
<dbReference type="TreeFam" id="TF101167"/>
<dbReference type="PathwayCommons" id="Q13098"/>
<dbReference type="Reactome" id="R-HSA-5696394">
    <property type="pathway name" value="DNA Damage Recognition in GG-NER"/>
</dbReference>
<dbReference type="Reactome" id="R-HSA-6781823">
    <property type="pathway name" value="Formation of TC-NER Pre-Incision Complex"/>
</dbReference>
<dbReference type="Reactome" id="R-HSA-8856825">
    <property type="pathway name" value="Cargo recognition for clathrin-mediated endocytosis"/>
</dbReference>
<dbReference type="Reactome" id="R-HSA-8951664">
    <property type="pathway name" value="Neddylation"/>
</dbReference>
<dbReference type="Reactome" id="R-HSA-9013422">
    <property type="pathway name" value="RHOBTB1 GTPase cycle"/>
</dbReference>
<dbReference type="SignaLink" id="Q13098"/>
<dbReference type="SIGNOR" id="Q13098"/>
<dbReference type="BioGRID-ORCS" id="2873">
    <property type="hits" value="741 hits in 1170 CRISPR screens"/>
</dbReference>
<dbReference type="CD-CODE" id="8C2F96ED">
    <property type="entry name" value="Centrosome"/>
</dbReference>
<dbReference type="ChiTaRS" id="GPS1">
    <property type="organism name" value="human"/>
</dbReference>
<dbReference type="EvolutionaryTrace" id="Q13098"/>
<dbReference type="GeneWiki" id="GPS1"/>
<dbReference type="GenomeRNAi" id="2873"/>
<dbReference type="Pharos" id="Q13098">
    <property type="development level" value="Tbio"/>
</dbReference>
<dbReference type="PRO" id="PR:Q13098"/>
<dbReference type="Proteomes" id="UP000005640">
    <property type="component" value="Chromosome 17"/>
</dbReference>
<dbReference type="RNAct" id="Q13098">
    <property type="molecule type" value="protein"/>
</dbReference>
<dbReference type="Bgee" id="ENSG00000169727">
    <property type="expression patterns" value="Expressed in apex of heart and 190 other cell types or tissues"/>
</dbReference>
<dbReference type="ExpressionAtlas" id="Q13098">
    <property type="expression patterns" value="baseline and differential"/>
</dbReference>
<dbReference type="GO" id="GO:0008180">
    <property type="term" value="C:COP9 signalosome"/>
    <property type="evidence" value="ECO:0000314"/>
    <property type="project" value="UniProtKB"/>
</dbReference>
<dbReference type="GO" id="GO:0005737">
    <property type="term" value="C:cytoplasm"/>
    <property type="evidence" value="ECO:0000314"/>
    <property type="project" value="ComplexPortal"/>
</dbReference>
<dbReference type="GO" id="GO:0005829">
    <property type="term" value="C:cytosol"/>
    <property type="evidence" value="ECO:0000314"/>
    <property type="project" value="HPA"/>
</dbReference>
<dbReference type="GO" id="GO:0005654">
    <property type="term" value="C:nucleoplasm"/>
    <property type="evidence" value="ECO:0000314"/>
    <property type="project" value="HPA"/>
</dbReference>
<dbReference type="GO" id="GO:0005634">
    <property type="term" value="C:nucleus"/>
    <property type="evidence" value="ECO:0000314"/>
    <property type="project" value="ComplexPortal"/>
</dbReference>
<dbReference type="GO" id="GO:0005095">
    <property type="term" value="F:GTPase inhibitor activity"/>
    <property type="evidence" value="ECO:0000304"/>
    <property type="project" value="ProtInc"/>
</dbReference>
<dbReference type="GO" id="GO:0007254">
    <property type="term" value="P:JNK cascade"/>
    <property type="evidence" value="ECO:0000304"/>
    <property type="project" value="ProtInc"/>
</dbReference>
<dbReference type="GO" id="GO:0000338">
    <property type="term" value="P:protein deneddylation"/>
    <property type="evidence" value="ECO:0000314"/>
    <property type="project" value="UniProtKB"/>
</dbReference>
<dbReference type="GO" id="GO:0045116">
    <property type="term" value="P:protein neddylation"/>
    <property type="evidence" value="ECO:0000303"/>
    <property type="project" value="ComplexPortal"/>
</dbReference>
<dbReference type="GO" id="GO:2000434">
    <property type="term" value="P:regulation of protein neddylation"/>
    <property type="evidence" value="ECO:0000303"/>
    <property type="project" value="ComplexPortal"/>
</dbReference>
<dbReference type="FunFam" id="1.25.40.570:FF:000002">
    <property type="entry name" value="COP9 signalosome complex subunit 1"/>
    <property type="match status" value="1"/>
</dbReference>
<dbReference type="Gene3D" id="1.25.40.570">
    <property type="match status" value="1"/>
</dbReference>
<dbReference type="InterPro" id="IPR048624">
    <property type="entry name" value="CSN1_C"/>
</dbReference>
<dbReference type="InterPro" id="IPR000717">
    <property type="entry name" value="PCI_dom"/>
</dbReference>
<dbReference type="InterPro" id="IPR019585">
    <property type="entry name" value="Rpn7/CSN1"/>
</dbReference>
<dbReference type="InterPro" id="IPR045135">
    <property type="entry name" value="Rpn7_N"/>
</dbReference>
<dbReference type="InterPro" id="IPR036390">
    <property type="entry name" value="WH_DNA-bd_sf"/>
</dbReference>
<dbReference type="PANTHER" id="PTHR14145">
    <property type="entry name" value="26S PROTESOME SUBUNIT 6"/>
    <property type="match status" value="1"/>
</dbReference>
<dbReference type="PANTHER" id="PTHR14145:SF2">
    <property type="entry name" value="COP9 SIGNALOSOME COMPLEX SUBUNIT 1"/>
    <property type="match status" value="1"/>
</dbReference>
<dbReference type="Pfam" id="PF21151">
    <property type="entry name" value="CSN1_C"/>
    <property type="match status" value="1"/>
</dbReference>
<dbReference type="Pfam" id="PF01399">
    <property type="entry name" value="PCI"/>
    <property type="match status" value="1"/>
</dbReference>
<dbReference type="Pfam" id="PF10602">
    <property type="entry name" value="RPN7"/>
    <property type="match status" value="1"/>
</dbReference>
<dbReference type="SMART" id="SM00088">
    <property type="entry name" value="PINT"/>
    <property type="match status" value="1"/>
</dbReference>
<dbReference type="SUPFAM" id="SSF46785">
    <property type="entry name" value="Winged helix' DNA-binding domain"/>
    <property type="match status" value="1"/>
</dbReference>
<dbReference type="PROSITE" id="PS50250">
    <property type="entry name" value="PCI"/>
    <property type="match status" value="1"/>
</dbReference>
<gene>
    <name type="primary">GPS1</name>
    <name type="synonym">COPS1</name>
    <name type="synonym">CSN1</name>
</gene>
<organism>
    <name type="scientific">Homo sapiens</name>
    <name type="common">Human</name>
    <dbReference type="NCBI Taxonomy" id="9606"/>
    <lineage>
        <taxon>Eukaryota</taxon>
        <taxon>Metazoa</taxon>
        <taxon>Chordata</taxon>
        <taxon>Craniata</taxon>
        <taxon>Vertebrata</taxon>
        <taxon>Euteleostomi</taxon>
        <taxon>Mammalia</taxon>
        <taxon>Eutheria</taxon>
        <taxon>Euarchontoglires</taxon>
        <taxon>Primates</taxon>
        <taxon>Haplorrhini</taxon>
        <taxon>Catarrhini</taxon>
        <taxon>Hominidae</taxon>
        <taxon>Homo</taxon>
    </lineage>
</organism>